<comment type="function">
    <text evidence="1">NAD-binding protein involved in the addition of a carboxymethylaminomethyl (cmnm) group at the wobble position (U34) of certain tRNAs, forming tRNA-cmnm(5)s(2)U34.</text>
</comment>
<comment type="cofactor">
    <cofactor evidence="1">
        <name>FAD</name>
        <dbReference type="ChEBI" id="CHEBI:57692"/>
    </cofactor>
</comment>
<comment type="subunit">
    <text evidence="1">Homodimer. Heterotetramer of two MnmE and two MnmG subunits.</text>
</comment>
<comment type="subcellular location">
    <subcellularLocation>
        <location evidence="1">Cytoplasm</location>
    </subcellularLocation>
</comment>
<comment type="similarity">
    <text evidence="1">Belongs to the MnmG family.</text>
</comment>
<sequence length="621" mass="69195">MLKYGVIIIGGGHAGVEAAAASARLGVHTLLITLKPENLGEMSCNPAIGGIAKGTLVKEIDALDGLMGFVIDKSGIHYKMLNETRGPAVWGPRAQADRKLYKKVMYQILTNYRNLDILYAKVEDIQIKSSKVEAVILSNGSKIFCQKVVLTTGTFLSGFIHIGSIKMPAGRIYEEPSYGLSNTLKRLGFKIARLKTGTPPRIDGRTIDYSKTALQQGDQIPRPFSELTDVIDVPQINCFITKTTSETHDIIRENLDKSAMYSGQIEGIGPRYCPSIEDKIVKFSTKLEHRIFLEPEGLEDYTIYPNGISTSLPEEVQYKLIKTIPGLENAQVLRPGYAIEYDYVDPREINVTLETKKITGLYFAGQINGTTGYEEAAGQGIIAGINAALSVKDQAPFILTRATSYIGVMIDDLTTFGTVEPYRMFTSRSEYRLSLRADNADLRLTELGIKIGVITEKRKKFFTKKCKNIEKTKLLLNNLSLTTSKLAKMGIQVAQDGKYKTILDLFKIPSFNVEQAIKIFPILKKQNNNILQLLYIEAKYASYLTRQYADINLFQSEEIQLIPKNIDYFKIPSISLEIQEKLSYHKPATIGVARRISGITPASITAIIIYLKTKYSDESSK</sequence>
<organism>
    <name type="scientific">Rickettsia prowazekii (strain Madrid E)</name>
    <dbReference type="NCBI Taxonomy" id="272947"/>
    <lineage>
        <taxon>Bacteria</taxon>
        <taxon>Pseudomonadati</taxon>
        <taxon>Pseudomonadota</taxon>
        <taxon>Alphaproteobacteria</taxon>
        <taxon>Rickettsiales</taxon>
        <taxon>Rickettsiaceae</taxon>
        <taxon>Rickettsieae</taxon>
        <taxon>Rickettsia</taxon>
        <taxon>typhus group</taxon>
    </lineage>
</organism>
<dbReference type="EMBL" id="AJ235270">
    <property type="protein sequence ID" value="CAA14527.1"/>
    <property type="molecule type" value="Genomic_DNA"/>
</dbReference>
<dbReference type="PIR" id="H71713">
    <property type="entry name" value="H71713"/>
</dbReference>
<dbReference type="RefSeq" id="NP_220450.1">
    <property type="nucleotide sequence ID" value="NC_000963.1"/>
</dbReference>
<dbReference type="RefSeq" id="WP_010886201.1">
    <property type="nucleotide sequence ID" value="NC_000963.1"/>
</dbReference>
<dbReference type="SMR" id="Q9ZE90"/>
<dbReference type="STRING" id="272947.gene:17555139"/>
<dbReference type="EnsemblBacteria" id="CAA14527">
    <property type="protein sequence ID" value="CAA14527"/>
    <property type="gene ID" value="CAA14527"/>
</dbReference>
<dbReference type="KEGG" id="rpr:RP056"/>
<dbReference type="PATRIC" id="fig|272947.5.peg.57"/>
<dbReference type="eggNOG" id="COG0445">
    <property type="taxonomic scope" value="Bacteria"/>
</dbReference>
<dbReference type="HOGENOM" id="CLU_007831_2_2_5"/>
<dbReference type="OrthoDB" id="9815560at2"/>
<dbReference type="Proteomes" id="UP000002480">
    <property type="component" value="Chromosome"/>
</dbReference>
<dbReference type="GO" id="GO:0005829">
    <property type="term" value="C:cytosol"/>
    <property type="evidence" value="ECO:0007669"/>
    <property type="project" value="TreeGrafter"/>
</dbReference>
<dbReference type="GO" id="GO:0050660">
    <property type="term" value="F:flavin adenine dinucleotide binding"/>
    <property type="evidence" value="ECO:0007669"/>
    <property type="project" value="UniProtKB-UniRule"/>
</dbReference>
<dbReference type="GO" id="GO:0030488">
    <property type="term" value="P:tRNA methylation"/>
    <property type="evidence" value="ECO:0007669"/>
    <property type="project" value="TreeGrafter"/>
</dbReference>
<dbReference type="GO" id="GO:0002098">
    <property type="term" value="P:tRNA wobble uridine modification"/>
    <property type="evidence" value="ECO:0007669"/>
    <property type="project" value="InterPro"/>
</dbReference>
<dbReference type="FunFam" id="3.50.50.60:FF:000082">
    <property type="entry name" value="protein MTO1 homolog, mitochondrial isoform X1"/>
    <property type="match status" value="1"/>
</dbReference>
<dbReference type="FunFam" id="1.10.150.570:FF:000001">
    <property type="entry name" value="tRNA uridine 5-carboxymethylaminomethyl modification enzyme MnmG"/>
    <property type="match status" value="1"/>
</dbReference>
<dbReference type="FunFam" id="3.50.50.60:FF:000002">
    <property type="entry name" value="tRNA uridine 5-carboxymethylaminomethyl modification enzyme MnmG"/>
    <property type="match status" value="1"/>
</dbReference>
<dbReference type="Gene3D" id="3.50.50.60">
    <property type="entry name" value="FAD/NAD(P)-binding domain"/>
    <property type="match status" value="2"/>
</dbReference>
<dbReference type="Gene3D" id="1.10.150.570">
    <property type="entry name" value="GidA associated domain, C-terminal subdomain"/>
    <property type="match status" value="1"/>
</dbReference>
<dbReference type="HAMAP" id="MF_00129">
    <property type="entry name" value="MnmG_GidA"/>
    <property type="match status" value="1"/>
</dbReference>
<dbReference type="InterPro" id="IPR036188">
    <property type="entry name" value="FAD/NAD-bd_sf"/>
</dbReference>
<dbReference type="InterPro" id="IPR049312">
    <property type="entry name" value="GIDA_C_N"/>
</dbReference>
<dbReference type="InterPro" id="IPR004416">
    <property type="entry name" value="MnmG"/>
</dbReference>
<dbReference type="InterPro" id="IPR002218">
    <property type="entry name" value="MnmG-rel"/>
</dbReference>
<dbReference type="InterPro" id="IPR020595">
    <property type="entry name" value="MnmG-rel_CS"/>
</dbReference>
<dbReference type="InterPro" id="IPR026904">
    <property type="entry name" value="MnmG_C"/>
</dbReference>
<dbReference type="InterPro" id="IPR047001">
    <property type="entry name" value="MnmG_C_subdom"/>
</dbReference>
<dbReference type="InterPro" id="IPR044920">
    <property type="entry name" value="MnmG_C_subdom_sf"/>
</dbReference>
<dbReference type="InterPro" id="IPR040131">
    <property type="entry name" value="MnmG_N"/>
</dbReference>
<dbReference type="NCBIfam" id="TIGR00136">
    <property type="entry name" value="mnmG_gidA"/>
    <property type="match status" value="1"/>
</dbReference>
<dbReference type="PANTHER" id="PTHR11806">
    <property type="entry name" value="GLUCOSE INHIBITED DIVISION PROTEIN A"/>
    <property type="match status" value="1"/>
</dbReference>
<dbReference type="PANTHER" id="PTHR11806:SF0">
    <property type="entry name" value="PROTEIN MTO1 HOMOLOG, MITOCHONDRIAL"/>
    <property type="match status" value="1"/>
</dbReference>
<dbReference type="Pfam" id="PF01134">
    <property type="entry name" value="GIDA"/>
    <property type="match status" value="1"/>
</dbReference>
<dbReference type="Pfam" id="PF21680">
    <property type="entry name" value="GIDA_C_1st"/>
    <property type="match status" value="1"/>
</dbReference>
<dbReference type="Pfam" id="PF13932">
    <property type="entry name" value="SAM_GIDA_C"/>
    <property type="match status" value="1"/>
</dbReference>
<dbReference type="SMART" id="SM01228">
    <property type="entry name" value="GIDA_assoc_3"/>
    <property type="match status" value="1"/>
</dbReference>
<dbReference type="SUPFAM" id="SSF51905">
    <property type="entry name" value="FAD/NAD(P)-binding domain"/>
    <property type="match status" value="1"/>
</dbReference>
<dbReference type="PROSITE" id="PS01280">
    <property type="entry name" value="GIDA_1"/>
    <property type="match status" value="1"/>
</dbReference>
<dbReference type="PROSITE" id="PS01281">
    <property type="entry name" value="GIDA_2"/>
    <property type="match status" value="1"/>
</dbReference>
<evidence type="ECO:0000255" key="1">
    <source>
        <dbReference type="HAMAP-Rule" id="MF_00129"/>
    </source>
</evidence>
<proteinExistence type="inferred from homology"/>
<accession>Q9ZE90</accession>
<reference key="1">
    <citation type="journal article" date="1998" name="Nature">
        <title>The genome sequence of Rickettsia prowazekii and the origin of mitochondria.</title>
        <authorList>
            <person name="Andersson S.G.E."/>
            <person name="Zomorodipour A."/>
            <person name="Andersson J.O."/>
            <person name="Sicheritz-Ponten T."/>
            <person name="Alsmark U.C.M."/>
            <person name="Podowski R.M."/>
            <person name="Naeslund A.K."/>
            <person name="Eriksson A.-S."/>
            <person name="Winkler H.H."/>
            <person name="Kurland C.G."/>
        </authorList>
    </citation>
    <scope>NUCLEOTIDE SEQUENCE [LARGE SCALE GENOMIC DNA]</scope>
    <source>
        <strain>Madrid E</strain>
    </source>
</reference>
<keyword id="KW-0963">Cytoplasm</keyword>
<keyword id="KW-0274">FAD</keyword>
<keyword id="KW-0285">Flavoprotein</keyword>
<keyword id="KW-0520">NAD</keyword>
<keyword id="KW-1185">Reference proteome</keyword>
<keyword id="KW-0819">tRNA processing</keyword>
<feature type="chain" id="PRO_0000117166" description="tRNA uridine 5-carboxymethylaminomethyl modification enzyme MnmG">
    <location>
        <begin position="1"/>
        <end position="621"/>
    </location>
</feature>
<feature type="binding site" evidence="1">
    <location>
        <begin position="10"/>
        <end position="15"/>
    </location>
    <ligand>
        <name>FAD</name>
        <dbReference type="ChEBI" id="CHEBI:57692"/>
    </ligand>
</feature>
<feature type="binding site" evidence="1">
    <location>
        <position position="122"/>
    </location>
    <ligand>
        <name>FAD</name>
        <dbReference type="ChEBI" id="CHEBI:57692"/>
    </ligand>
</feature>
<feature type="binding site" evidence="1">
    <location>
        <position position="177"/>
    </location>
    <ligand>
        <name>FAD</name>
        <dbReference type="ChEBI" id="CHEBI:57692"/>
    </ligand>
</feature>
<feature type="binding site" evidence="1">
    <location>
        <begin position="269"/>
        <end position="283"/>
    </location>
    <ligand>
        <name>NAD(+)</name>
        <dbReference type="ChEBI" id="CHEBI:57540"/>
    </ligand>
</feature>
<feature type="binding site" evidence="1">
    <location>
        <position position="366"/>
    </location>
    <ligand>
        <name>FAD</name>
        <dbReference type="ChEBI" id="CHEBI:57692"/>
    </ligand>
</feature>
<protein>
    <recommendedName>
        <fullName evidence="1">tRNA uridine 5-carboxymethylaminomethyl modification enzyme MnmG</fullName>
    </recommendedName>
    <alternativeName>
        <fullName evidence="1">Glucose-inhibited division protein A</fullName>
    </alternativeName>
</protein>
<name>MNMG_RICPR</name>
<gene>
    <name evidence="1" type="primary">mnmG</name>
    <name evidence="1" type="synonym">gidA</name>
    <name type="ordered locus">RP056</name>
</gene>